<proteinExistence type="inferred from homology"/>
<keyword id="KW-0028">Amino-acid biosynthesis</keyword>
<keyword id="KW-0057">Aromatic amino acid biosynthesis</keyword>
<keyword id="KW-0521">NADP</keyword>
<keyword id="KW-0560">Oxidoreductase</keyword>
<dbReference type="EC" id="1.1.1.25" evidence="1"/>
<dbReference type="EMBL" id="CP001215">
    <property type="protein sequence ID" value="ACP16156.1"/>
    <property type="molecule type" value="Genomic_DNA"/>
</dbReference>
<dbReference type="RefSeq" id="WP_000827072.1">
    <property type="nucleotide sequence ID" value="NC_012581.1"/>
</dbReference>
<dbReference type="SMR" id="C3L5T8"/>
<dbReference type="KEGG" id="bah:BAMEG_4597"/>
<dbReference type="HOGENOM" id="CLU_044063_4_1_9"/>
<dbReference type="UniPathway" id="UPA00053">
    <property type="reaction ID" value="UER00087"/>
</dbReference>
<dbReference type="GO" id="GO:0005829">
    <property type="term" value="C:cytosol"/>
    <property type="evidence" value="ECO:0007669"/>
    <property type="project" value="TreeGrafter"/>
</dbReference>
<dbReference type="GO" id="GO:0050661">
    <property type="term" value="F:NADP binding"/>
    <property type="evidence" value="ECO:0007669"/>
    <property type="project" value="InterPro"/>
</dbReference>
<dbReference type="GO" id="GO:0004764">
    <property type="term" value="F:shikimate 3-dehydrogenase (NADP+) activity"/>
    <property type="evidence" value="ECO:0007669"/>
    <property type="project" value="UniProtKB-UniRule"/>
</dbReference>
<dbReference type="GO" id="GO:0008652">
    <property type="term" value="P:amino acid biosynthetic process"/>
    <property type="evidence" value="ECO:0007669"/>
    <property type="project" value="UniProtKB-KW"/>
</dbReference>
<dbReference type="GO" id="GO:0009073">
    <property type="term" value="P:aromatic amino acid family biosynthetic process"/>
    <property type="evidence" value="ECO:0007669"/>
    <property type="project" value="UniProtKB-KW"/>
</dbReference>
<dbReference type="GO" id="GO:0009423">
    <property type="term" value="P:chorismate biosynthetic process"/>
    <property type="evidence" value="ECO:0007669"/>
    <property type="project" value="UniProtKB-UniRule"/>
</dbReference>
<dbReference type="GO" id="GO:0019632">
    <property type="term" value="P:shikimate metabolic process"/>
    <property type="evidence" value="ECO:0007669"/>
    <property type="project" value="InterPro"/>
</dbReference>
<dbReference type="CDD" id="cd01065">
    <property type="entry name" value="NAD_bind_Shikimate_DH"/>
    <property type="match status" value="1"/>
</dbReference>
<dbReference type="FunFam" id="3.40.50.10860:FF:000011">
    <property type="entry name" value="Shikimate dehydrogenase (NADP(+))"/>
    <property type="match status" value="1"/>
</dbReference>
<dbReference type="FunFam" id="3.40.50.720:FF:000257">
    <property type="entry name" value="Shikimate dehydrogenase (NADP(+))"/>
    <property type="match status" value="1"/>
</dbReference>
<dbReference type="Gene3D" id="3.40.50.10860">
    <property type="entry name" value="Leucine Dehydrogenase, chain A, domain 1"/>
    <property type="match status" value="1"/>
</dbReference>
<dbReference type="Gene3D" id="3.40.50.720">
    <property type="entry name" value="NAD(P)-binding Rossmann-like Domain"/>
    <property type="match status" value="1"/>
</dbReference>
<dbReference type="HAMAP" id="MF_00222">
    <property type="entry name" value="Shikimate_DH_AroE"/>
    <property type="match status" value="1"/>
</dbReference>
<dbReference type="InterPro" id="IPR046346">
    <property type="entry name" value="Aminoacid_DH-like_N_sf"/>
</dbReference>
<dbReference type="InterPro" id="IPR036291">
    <property type="entry name" value="NAD(P)-bd_dom_sf"/>
</dbReference>
<dbReference type="InterPro" id="IPR041121">
    <property type="entry name" value="SDH_C"/>
</dbReference>
<dbReference type="InterPro" id="IPR011342">
    <property type="entry name" value="Shikimate_DH"/>
</dbReference>
<dbReference type="InterPro" id="IPR013708">
    <property type="entry name" value="Shikimate_DH-bd_N"/>
</dbReference>
<dbReference type="InterPro" id="IPR022893">
    <property type="entry name" value="Shikimate_DH_fam"/>
</dbReference>
<dbReference type="InterPro" id="IPR006151">
    <property type="entry name" value="Shikm_DH/Glu-tRNA_Rdtase"/>
</dbReference>
<dbReference type="NCBIfam" id="TIGR00507">
    <property type="entry name" value="aroE"/>
    <property type="match status" value="1"/>
</dbReference>
<dbReference type="NCBIfam" id="NF001319">
    <property type="entry name" value="PRK00258.3-3"/>
    <property type="match status" value="1"/>
</dbReference>
<dbReference type="PANTHER" id="PTHR21089:SF1">
    <property type="entry name" value="BIFUNCTIONAL 3-DEHYDROQUINATE DEHYDRATASE_SHIKIMATE DEHYDROGENASE, CHLOROPLASTIC"/>
    <property type="match status" value="1"/>
</dbReference>
<dbReference type="PANTHER" id="PTHR21089">
    <property type="entry name" value="SHIKIMATE DEHYDROGENASE"/>
    <property type="match status" value="1"/>
</dbReference>
<dbReference type="Pfam" id="PF18317">
    <property type="entry name" value="SDH_C"/>
    <property type="match status" value="1"/>
</dbReference>
<dbReference type="Pfam" id="PF01488">
    <property type="entry name" value="Shikimate_DH"/>
    <property type="match status" value="1"/>
</dbReference>
<dbReference type="Pfam" id="PF08501">
    <property type="entry name" value="Shikimate_dh_N"/>
    <property type="match status" value="1"/>
</dbReference>
<dbReference type="SUPFAM" id="SSF53223">
    <property type="entry name" value="Aminoacid dehydrogenase-like, N-terminal domain"/>
    <property type="match status" value="1"/>
</dbReference>
<dbReference type="SUPFAM" id="SSF51735">
    <property type="entry name" value="NAD(P)-binding Rossmann-fold domains"/>
    <property type="match status" value="1"/>
</dbReference>
<feature type="chain" id="PRO_1000124872" description="Shikimate dehydrogenase (NADP(+))">
    <location>
        <begin position="1"/>
        <end position="277"/>
    </location>
</feature>
<feature type="active site" description="Proton acceptor" evidence="1">
    <location>
        <position position="66"/>
    </location>
</feature>
<feature type="binding site" evidence="1">
    <location>
        <begin position="15"/>
        <end position="17"/>
    </location>
    <ligand>
        <name>shikimate</name>
        <dbReference type="ChEBI" id="CHEBI:36208"/>
    </ligand>
</feature>
<feature type="binding site" evidence="1">
    <location>
        <position position="62"/>
    </location>
    <ligand>
        <name>shikimate</name>
        <dbReference type="ChEBI" id="CHEBI:36208"/>
    </ligand>
</feature>
<feature type="binding site" evidence="1">
    <location>
        <position position="87"/>
    </location>
    <ligand>
        <name>shikimate</name>
        <dbReference type="ChEBI" id="CHEBI:36208"/>
    </ligand>
</feature>
<feature type="binding site" evidence="1">
    <location>
        <position position="102"/>
    </location>
    <ligand>
        <name>shikimate</name>
        <dbReference type="ChEBI" id="CHEBI:36208"/>
    </ligand>
</feature>
<feature type="binding site" evidence="1">
    <location>
        <begin position="127"/>
        <end position="131"/>
    </location>
    <ligand>
        <name>NADP(+)</name>
        <dbReference type="ChEBI" id="CHEBI:58349"/>
    </ligand>
</feature>
<feature type="binding site" evidence="1">
    <location>
        <begin position="151"/>
        <end position="156"/>
    </location>
    <ligand>
        <name>NADP(+)</name>
        <dbReference type="ChEBI" id="CHEBI:58349"/>
    </ligand>
</feature>
<feature type="binding site" evidence="1">
    <location>
        <position position="219"/>
    </location>
    <ligand>
        <name>NADP(+)</name>
        <dbReference type="ChEBI" id="CHEBI:58349"/>
    </ligand>
</feature>
<feature type="binding site" evidence="1">
    <location>
        <position position="221"/>
    </location>
    <ligand>
        <name>shikimate</name>
        <dbReference type="ChEBI" id="CHEBI:36208"/>
    </ligand>
</feature>
<feature type="binding site" evidence="1">
    <location>
        <position position="242"/>
    </location>
    <ligand>
        <name>NADP(+)</name>
        <dbReference type="ChEBI" id="CHEBI:58349"/>
    </ligand>
</feature>
<reference key="1">
    <citation type="submission" date="2008-10" db="EMBL/GenBank/DDBJ databases">
        <title>Genome sequence of Bacillus anthracis str. CDC 684.</title>
        <authorList>
            <person name="Dodson R.J."/>
            <person name="Munk A.C."/>
            <person name="Brettin T."/>
            <person name="Bruce D."/>
            <person name="Detter C."/>
            <person name="Tapia R."/>
            <person name="Han C."/>
            <person name="Sutton G."/>
            <person name="Sims D."/>
        </authorList>
    </citation>
    <scope>NUCLEOTIDE SEQUENCE [LARGE SCALE GENOMIC DNA]</scope>
    <source>
        <strain>CDC 684 / NRRL 3495</strain>
    </source>
</reference>
<organism>
    <name type="scientific">Bacillus anthracis (strain CDC 684 / NRRL 3495)</name>
    <dbReference type="NCBI Taxonomy" id="568206"/>
    <lineage>
        <taxon>Bacteria</taxon>
        <taxon>Bacillati</taxon>
        <taxon>Bacillota</taxon>
        <taxon>Bacilli</taxon>
        <taxon>Bacillales</taxon>
        <taxon>Bacillaceae</taxon>
        <taxon>Bacillus</taxon>
        <taxon>Bacillus cereus group</taxon>
    </lineage>
</organism>
<gene>
    <name evidence="1" type="primary">aroE</name>
    <name type="ordered locus">BAMEG_4597</name>
</gene>
<sequence length="277" mass="30192">MKRLYGVIGNPIGHSLSPVMHNDAFEHLKMDAHYHAFLVKEEVLGEAVRGLKALGISGFNVTTPHKVAIMDYLDEIDPLAKQIGAVNTVVHKDGKLIGYNTDGIGFVRALQSISSEPLQEKRILLLGAGGASRAIYFSLADAGVKEIDVANRTVDKAKELIAACTATVHSVALSLEKATKEQGNYDIIIQTTTIGMHPRVEHTPLQISSLKKGTIVSDIIYNPFETKILCEAKEQGAIIQNGIDMFVYQGALAFEMWTGCVPNIERMKQLVIRKLGG</sequence>
<accession>C3L5T8</accession>
<comment type="function">
    <text evidence="1">Involved in the biosynthesis of the chorismate, which leads to the biosynthesis of aromatic amino acids. Catalyzes the reversible NADPH linked reduction of 3-dehydroshikimate (DHSA) to yield shikimate (SA).</text>
</comment>
<comment type="catalytic activity">
    <reaction evidence="1">
        <text>shikimate + NADP(+) = 3-dehydroshikimate + NADPH + H(+)</text>
        <dbReference type="Rhea" id="RHEA:17737"/>
        <dbReference type="ChEBI" id="CHEBI:15378"/>
        <dbReference type="ChEBI" id="CHEBI:16630"/>
        <dbReference type="ChEBI" id="CHEBI:36208"/>
        <dbReference type="ChEBI" id="CHEBI:57783"/>
        <dbReference type="ChEBI" id="CHEBI:58349"/>
        <dbReference type="EC" id="1.1.1.25"/>
    </reaction>
</comment>
<comment type="pathway">
    <text evidence="1">Metabolic intermediate biosynthesis; chorismate biosynthesis; chorismate from D-erythrose 4-phosphate and phosphoenolpyruvate: step 4/7.</text>
</comment>
<comment type="subunit">
    <text evidence="1">Homodimer.</text>
</comment>
<comment type="similarity">
    <text evidence="1">Belongs to the shikimate dehydrogenase family.</text>
</comment>
<protein>
    <recommendedName>
        <fullName evidence="1">Shikimate dehydrogenase (NADP(+))</fullName>
        <shortName evidence="1">SDH</shortName>
        <ecNumber evidence="1">1.1.1.25</ecNumber>
    </recommendedName>
</protein>
<name>AROE_BACAC</name>
<evidence type="ECO:0000255" key="1">
    <source>
        <dbReference type="HAMAP-Rule" id="MF_00222"/>
    </source>
</evidence>